<dbReference type="EC" id="1.1.1.34"/>
<dbReference type="EMBL" id="AE000666">
    <property type="protein sequence ID" value="AAB85068.1"/>
    <property type="molecule type" value="Genomic_DNA"/>
</dbReference>
<dbReference type="PIR" id="D69174">
    <property type="entry name" value="D69174"/>
</dbReference>
<dbReference type="RefSeq" id="WP_010876201.1">
    <property type="nucleotide sequence ID" value="NC_000916.1"/>
</dbReference>
<dbReference type="SMR" id="O26662"/>
<dbReference type="FunCoup" id="O26662">
    <property type="interactions" value="40"/>
</dbReference>
<dbReference type="STRING" id="187420.MTH_562"/>
<dbReference type="PaxDb" id="187420-MTH_562"/>
<dbReference type="EnsemblBacteria" id="AAB85068">
    <property type="protein sequence ID" value="AAB85068"/>
    <property type="gene ID" value="MTH_562"/>
</dbReference>
<dbReference type="GeneID" id="1470523"/>
<dbReference type="GeneID" id="77402973"/>
<dbReference type="KEGG" id="mth:MTH_562"/>
<dbReference type="PATRIC" id="fig|187420.15.peg.542"/>
<dbReference type="HOGENOM" id="CLU_001734_2_2_2"/>
<dbReference type="InParanoid" id="O26662"/>
<dbReference type="UniPathway" id="UPA00058">
    <property type="reaction ID" value="UER00103"/>
</dbReference>
<dbReference type="Proteomes" id="UP000005223">
    <property type="component" value="Chromosome"/>
</dbReference>
<dbReference type="GO" id="GO:0004420">
    <property type="term" value="F:hydroxymethylglutaryl-CoA reductase (NADPH) activity"/>
    <property type="evidence" value="ECO:0007669"/>
    <property type="project" value="UniProtKB-EC"/>
</dbReference>
<dbReference type="GO" id="GO:0015936">
    <property type="term" value="P:coenzyme A metabolic process"/>
    <property type="evidence" value="ECO:0007669"/>
    <property type="project" value="InterPro"/>
</dbReference>
<dbReference type="GO" id="GO:0008299">
    <property type="term" value="P:isoprenoid biosynthetic process"/>
    <property type="evidence" value="ECO:0007669"/>
    <property type="project" value="UniProtKB-KW"/>
</dbReference>
<dbReference type="GO" id="GO:0016126">
    <property type="term" value="P:sterol biosynthetic process"/>
    <property type="evidence" value="ECO:0007669"/>
    <property type="project" value="TreeGrafter"/>
</dbReference>
<dbReference type="CDD" id="cd00643">
    <property type="entry name" value="HMG-CoA_reductase_classI"/>
    <property type="match status" value="1"/>
</dbReference>
<dbReference type="FunFam" id="3.30.70.420:FF:000001">
    <property type="entry name" value="3-hydroxy-3-methylglutaryl coenzyme A reductase"/>
    <property type="match status" value="1"/>
</dbReference>
<dbReference type="Gene3D" id="3.90.770.10">
    <property type="entry name" value="3-hydroxy-3-methylglutaryl-coenzyme A Reductase, Chain A, domain 2"/>
    <property type="match status" value="1"/>
</dbReference>
<dbReference type="Gene3D" id="3.30.70.420">
    <property type="entry name" value="Hydroxymethylglutaryl-CoA reductase, class I/II, NAD/NADP-binding domain"/>
    <property type="match status" value="1"/>
</dbReference>
<dbReference type="InterPro" id="IPR002202">
    <property type="entry name" value="HMG_CoA_Rdtase"/>
</dbReference>
<dbReference type="InterPro" id="IPR023074">
    <property type="entry name" value="HMG_CoA_Rdtase_cat_sf"/>
</dbReference>
<dbReference type="InterPro" id="IPR023076">
    <property type="entry name" value="HMG_CoA_Rdtase_CS"/>
</dbReference>
<dbReference type="InterPro" id="IPR004554">
    <property type="entry name" value="HMG_CoA_Rdtase_eu_arc"/>
</dbReference>
<dbReference type="InterPro" id="IPR009023">
    <property type="entry name" value="HMG_CoA_Rdtase_NAD(P)-bd_sf"/>
</dbReference>
<dbReference type="InterPro" id="IPR009029">
    <property type="entry name" value="HMG_CoA_Rdtase_sub-bd_dom_sf"/>
</dbReference>
<dbReference type="NCBIfam" id="TIGR00533">
    <property type="entry name" value="HMG_CoA_R_NADP"/>
    <property type="match status" value="1"/>
</dbReference>
<dbReference type="PANTHER" id="PTHR10572">
    <property type="entry name" value="3-HYDROXY-3-METHYLGLUTARYL-COENZYME A REDUCTASE"/>
    <property type="match status" value="1"/>
</dbReference>
<dbReference type="PANTHER" id="PTHR10572:SF24">
    <property type="entry name" value="3-HYDROXY-3-METHYLGLUTARYL-COENZYME A REDUCTASE"/>
    <property type="match status" value="1"/>
</dbReference>
<dbReference type="Pfam" id="PF00368">
    <property type="entry name" value="HMG-CoA_red"/>
    <property type="match status" value="1"/>
</dbReference>
<dbReference type="PRINTS" id="PR00071">
    <property type="entry name" value="HMGCOARDTASE"/>
</dbReference>
<dbReference type="SUPFAM" id="SSF55035">
    <property type="entry name" value="NAD-binding domain of HMG-CoA reductase"/>
    <property type="match status" value="1"/>
</dbReference>
<dbReference type="SUPFAM" id="SSF56542">
    <property type="entry name" value="Substrate-binding domain of HMG-CoA reductase"/>
    <property type="match status" value="1"/>
</dbReference>
<dbReference type="PROSITE" id="PS00066">
    <property type="entry name" value="HMG_COA_REDUCTASE_1"/>
    <property type="match status" value="1"/>
</dbReference>
<dbReference type="PROSITE" id="PS50065">
    <property type="entry name" value="HMG_COA_REDUCTASE_4"/>
    <property type="match status" value="1"/>
</dbReference>
<sequence>MSIMDDLMEGRIKLYEIERHVPVDEAVRIRREFIERTCGVKLEHVSNYSIDMERASRRNIENPIGVVQIPLGVAGPLRVRGEHADGEYYVPLATSEGALVASVNRGCSVITRAGGATVRVTGDSMTRAPVIRTGSVVEALQLREWIYENMDALREEAESTTRHGKLVKIDPIIVAGSYVYPRFVYTTGDSMGMNMVTIATERALELLTRETGAHVIALSGNLCTDKKPAAVNLIEGRGKSITAEITVPGEMVESVLKTTPEAVVEVNTAKNLIGSAAAGSMGFNAHYANIIGAIFLATGQDEAHIVEGSLGVTIAEERKGDLYFAVNLPDVPLATVGGGTGLETASECLDIMGVRGGGRVHAFAEIVGGAVLAGELSLMGALAAGHLARAHSELGRG</sequence>
<organism>
    <name type="scientific">Methanothermobacter thermautotrophicus (strain ATCC 29096 / DSM 1053 / JCM 10044 / NBRC 100330 / Delta H)</name>
    <name type="common">Methanobacterium thermoautotrophicum</name>
    <dbReference type="NCBI Taxonomy" id="187420"/>
    <lineage>
        <taxon>Archaea</taxon>
        <taxon>Methanobacteriati</taxon>
        <taxon>Methanobacteriota</taxon>
        <taxon>Methanomada group</taxon>
        <taxon>Methanobacteria</taxon>
        <taxon>Methanobacteriales</taxon>
        <taxon>Methanobacteriaceae</taxon>
        <taxon>Methanothermobacter</taxon>
    </lineage>
</organism>
<evidence type="ECO:0000250" key="1"/>
<evidence type="ECO:0000305" key="2"/>
<proteinExistence type="inferred from homology"/>
<comment type="function">
    <text evidence="1">Converts HMG-CoA to mevalonate.</text>
</comment>
<comment type="catalytic activity">
    <reaction>
        <text>(R)-mevalonate + 2 NADP(+) + CoA = (3S)-3-hydroxy-3-methylglutaryl-CoA + 2 NADPH + 2 H(+)</text>
        <dbReference type="Rhea" id="RHEA:15989"/>
        <dbReference type="ChEBI" id="CHEBI:15378"/>
        <dbReference type="ChEBI" id="CHEBI:36464"/>
        <dbReference type="ChEBI" id="CHEBI:43074"/>
        <dbReference type="ChEBI" id="CHEBI:57287"/>
        <dbReference type="ChEBI" id="CHEBI:57783"/>
        <dbReference type="ChEBI" id="CHEBI:58349"/>
        <dbReference type="EC" id="1.1.1.34"/>
    </reaction>
</comment>
<comment type="pathway">
    <text>Metabolic intermediate biosynthesis; (R)-mevalonate biosynthesis; (R)-mevalonate from acetyl-CoA: step 3/3.</text>
</comment>
<comment type="similarity">
    <text evidence="2">Belongs to the HMG-CoA reductase family.</text>
</comment>
<name>HMDH_METTH</name>
<feature type="chain" id="PRO_0000114462" description="3-hydroxy-3-methylglutaryl-coenzyme A reductase">
    <location>
        <begin position="1"/>
        <end position="397"/>
    </location>
</feature>
<feature type="active site" description="Charge relay system" evidence="1">
    <location>
        <position position="96"/>
    </location>
</feature>
<feature type="active site" description="Charge relay system" evidence="1">
    <location>
        <position position="301"/>
    </location>
</feature>
<feature type="active site" description="Proton donor" evidence="1">
    <location>
        <position position="391"/>
    </location>
</feature>
<accession>O26662</accession>
<protein>
    <recommendedName>
        <fullName>3-hydroxy-3-methylglutaryl-coenzyme A reductase</fullName>
        <shortName>HMG-CoA reductase</shortName>
        <ecNumber>1.1.1.34</ecNumber>
    </recommendedName>
</protein>
<gene>
    <name type="primary">hmgA</name>
    <name type="ordered locus">MTH_562</name>
</gene>
<keyword id="KW-0414">Isoprene biosynthesis</keyword>
<keyword id="KW-0521">NADP</keyword>
<keyword id="KW-0560">Oxidoreductase</keyword>
<keyword id="KW-1185">Reference proteome</keyword>
<reference key="1">
    <citation type="journal article" date="1997" name="J. Bacteriol.">
        <title>Complete genome sequence of Methanobacterium thermoautotrophicum deltaH: functional analysis and comparative genomics.</title>
        <authorList>
            <person name="Smith D.R."/>
            <person name="Doucette-Stamm L.A."/>
            <person name="Deloughery C."/>
            <person name="Lee H.-M."/>
            <person name="Dubois J."/>
            <person name="Aldredge T."/>
            <person name="Bashirzadeh R."/>
            <person name="Blakely D."/>
            <person name="Cook R."/>
            <person name="Gilbert K."/>
            <person name="Harrison D."/>
            <person name="Hoang L."/>
            <person name="Keagle P."/>
            <person name="Lumm W."/>
            <person name="Pothier B."/>
            <person name="Qiu D."/>
            <person name="Spadafora R."/>
            <person name="Vicare R."/>
            <person name="Wang Y."/>
            <person name="Wierzbowski J."/>
            <person name="Gibson R."/>
            <person name="Jiwani N."/>
            <person name="Caruso A."/>
            <person name="Bush D."/>
            <person name="Safer H."/>
            <person name="Patwell D."/>
            <person name="Prabhakar S."/>
            <person name="McDougall S."/>
            <person name="Shimer G."/>
            <person name="Goyal A."/>
            <person name="Pietrovski S."/>
            <person name="Church G.M."/>
            <person name="Daniels C.J."/>
            <person name="Mao J.-I."/>
            <person name="Rice P."/>
            <person name="Noelling J."/>
            <person name="Reeve J.N."/>
        </authorList>
    </citation>
    <scope>NUCLEOTIDE SEQUENCE [LARGE SCALE GENOMIC DNA]</scope>
    <source>
        <strain>ATCC 29096 / DSM 1053 / JCM 10044 / NBRC 100330 / Delta H</strain>
    </source>
</reference>